<name>RS19_THEM4</name>
<reference key="1">
    <citation type="submission" date="2007-05" db="EMBL/GenBank/DDBJ databases">
        <title>Complete sequence of Thermosipho melanesiensis BI429.</title>
        <authorList>
            <consortium name="US DOE Joint Genome Institute"/>
            <person name="Copeland A."/>
            <person name="Lucas S."/>
            <person name="Lapidus A."/>
            <person name="Barry K."/>
            <person name="Glavina del Rio T."/>
            <person name="Dalin E."/>
            <person name="Tice H."/>
            <person name="Pitluck S."/>
            <person name="Chertkov O."/>
            <person name="Brettin T."/>
            <person name="Bruce D."/>
            <person name="Detter J.C."/>
            <person name="Han C."/>
            <person name="Schmutz J."/>
            <person name="Larimer F."/>
            <person name="Land M."/>
            <person name="Hauser L."/>
            <person name="Kyrpides N."/>
            <person name="Mikhailova N."/>
            <person name="Nelson K."/>
            <person name="Gogarten J.P."/>
            <person name="Noll K."/>
            <person name="Richardson P."/>
        </authorList>
    </citation>
    <scope>NUCLEOTIDE SEQUENCE [LARGE SCALE GENOMIC DNA]</scope>
    <source>
        <strain>DSM 12029 / CIP 104789 / BI429</strain>
    </source>
</reference>
<accession>A6LLL7</accession>
<feature type="chain" id="PRO_1000051139" description="Small ribosomal subunit protein uS19">
    <location>
        <begin position="1"/>
        <end position="95"/>
    </location>
</feature>
<proteinExistence type="inferred from homology"/>
<organism>
    <name type="scientific">Thermosipho melanesiensis (strain DSM 12029 / CIP 104789 / BI429)</name>
    <dbReference type="NCBI Taxonomy" id="391009"/>
    <lineage>
        <taxon>Bacteria</taxon>
        <taxon>Thermotogati</taxon>
        <taxon>Thermotogota</taxon>
        <taxon>Thermotogae</taxon>
        <taxon>Thermotogales</taxon>
        <taxon>Fervidobacteriaceae</taxon>
        <taxon>Thermosipho</taxon>
    </lineage>
</organism>
<dbReference type="EMBL" id="CP000716">
    <property type="protein sequence ID" value="ABR30818.1"/>
    <property type="molecule type" value="Genomic_DNA"/>
</dbReference>
<dbReference type="RefSeq" id="WP_012057179.1">
    <property type="nucleotide sequence ID" value="NC_009616.1"/>
</dbReference>
<dbReference type="SMR" id="A6LLL7"/>
<dbReference type="STRING" id="391009.Tmel_0957"/>
<dbReference type="KEGG" id="tme:Tmel_0957"/>
<dbReference type="eggNOG" id="COG0185">
    <property type="taxonomic scope" value="Bacteria"/>
</dbReference>
<dbReference type="HOGENOM" id="CLU_144911_0_1_0"/>
<dbReference type="OrthoDB" id="9797833at2"/>
<dbReference type="Proteomes" id="UP000001110">
    <property type="component" value="Chromosome"/>
</dbReference>
<dbReference type="GO" id="GO:0005737">
    <property type="term" value="C:cytoplasm"/>
    <property type="evidence" value="ECO:0007669"/>
    <property type="project" value="UniProtKB-ARBA"/>
</dbReference>
<dbReference type="GO" id="GO:0015935">
    <property type="term" value="C:small ribosomal subunit"/>
    <property type="evidence" value="ECO:0007669"/>
    <property type="project" value="InterPro"/>
</dbReference>
<dbReference type="GO" id="GO:0019843">
    <property type="term" value="F:rRNA binding"/>
    <property type="evidence" value="ECO:0007669"/>
    <property type="project" value="UniProtKB-UniRule"/>
</dbReference>
<dbReference type="GO" id="GO:0003735">
    <property type="term" value="F:structural constituent of ribosome"/>
    <property type="evidence" value="ECO:0007669"/>
    <property type="project" value="InterPro"/>
</dbReference>
<dbReference type="GO" id="GO:0000028">
    <property type="term" value="P:ribosomal small subunit assembly"/>
    <property type="evidence" value="ECO:0007669"/>
    <property type="project" value="TreeGrafter"/>
</dbReference>
<dbReference type="GO" id="GO:0006412">
    <property type="term" value="P:translation"/>
    <property type="evidence" value="ECO:0007669"/>
    <property type="project" value="UniProtKB-UniRule"/>
</dbReference>
<dbReference type="FunFam" id="3.30.860.10:FF:000001">
    <property type="entry name" value="30S ribosomal protein S19"/>
    <property type="match status" value="1"/>
</dbReference>
<dbReference type="Gene3D" id="3.30.860.10">
    <property type="entry name" value="30s Ribosomal Protein S19, Chain A"/>
    <property type="match status" value="1"/>
</dbReference>
<dbReference type="HAMAP" id="MF_00531">
    <property type="entry name" value="Ribosomal_uS19"/>
    <property type="match status" value="1"/>
</dbReference>
<dbReference type="InterPro" id="IPR002222">
    <property type="entry name" value="Ribosomal_uS19"/>
</dbReference>
<dbReference type="InterPro" id="IPR005732">
    <property type="entry name" value="Ribosomal_uS19_bac-type"/>
</dbReference>
<dbReference type="InterPro" id="IPR023575">
    <property type="entry name" value="Ribosomal_uS19_SF"/>
</dbReference>
<dbReference type="NCBIfam" id="TIGR01050">
    <property type="entry name" value="rpsS_bact"/>
    <property type="match status" value="1"/>
</dbReference>
<dbReference type="PANTHER" id="PTHR11880">
    <property type="entry name" value="RIBOSOMAL PROTEIN S19P FAMILY MEMBER"/>
    <property type="match status" value="1"/>
</dbReference>
<dbReference type="PANTHER" id="PTHR11880:SF8">
    <property type="entry name" value="SMALL RIBOSOMAL SUBUNIT PROTEIN US19M"/>
    <property type="match status" value="1"/>
</dbReference>
<dbReference type="Pfam" id="PF00203">
    <property type="entry name" value="Ribosomal_S19"/>
    <property type="match status" value="1"/>
</dbReference>
<dbReference type="PIRSF" id="PIRSF002144">
    <property type="entry name" value="Ribosomal_S19"/>
    <property type="match status" value="1"/>
</dbReference>
<dbReference type="PRINTS" id="PR00975">
    <property type="entry name" value="RIBOSOMALS19"/>
</dbReference>
<dbReference type="SUPFAM" id="SSF54570">
    <property type="entry name" value="Ribosomal protein S19"/>
    <property type="match status" value="1"/>
</dbReference>
<sequence>MGRSTKKGPFVDPKLLKKIKQLNEAGEKKIIKTWSRASMIVPEMVGHTIAVYNGLKHIPVYITENMVGHRLGEFSFTRRFGGHADKSASKGQVKK</sequence>
<gene>
    <name evidence="1" type="primary">rpsS</name>
    <name type="ordered locus">Tmel_0957</name>
</gene>
<evidence type="ECO:0000255" key="1">
    <source>
        <dbReference type="HAMAP-Rule" id="MF_00531"/>
    </source>
</evidence>
<evidence type="ECO:0000305" key="2"/>
<keyword id="KW-0687">Ribonucleoprotein</keyword>
<keyword id="KW-0689">Ribosomal protein</keyword>
<keyword id="KW-0694">RNA-binding</keyword>
<keyword id="KW-0699">rRNA-binding</keyword>
<protein>
    <recommendedName>
        <fullName evidence="1">Small ribosomal subunit protein uS19</fullName>
    </recommendedName>
    <alternativeName>
        <fullName evidence="2">30S ribosomal protein S19</fullName>
    </alternativeName>
</protein>
<comment type="function">
    <text evidence="1">Protein S19 forms a complex with S13 that binds strongly to the 16S ribosomal RNA.</text>
</comment>
<comment type="similarity">
    <text evidence="1">Belongs to the universal ribosomal protein uS19 family.</text>
</comment>